<dbReference type="EC" id="4.3.2.10" evidence="1"/>
<dbReference type="EMBL" id="AP009324">
    <property type="protein sequence ID" value="BAF79540.1"/>
    <property type="molecule type" value="Genomic_DNA"/>
</dbReference>
<dbReference type="SMR" id="A7X763"/>
<dbReference type="KEGG" id="saw:SAHV_2657"/>
<dbReference type="HOGENOM" id="CLU_048577_4_0_9"/>
<dbReference type="UniPathway" id="UPA00031">
    <property type="reaction ID" value="UER00010"/>
</dbReference>
<dbReference type="GO" id="GO:0005737">
    <property type="term" value="C:cytoplasm"/>
    <property type="evidence" value="ECO:0007669"/>
    <property type="project" value="UniProtKB-SubCell"/>
</dbReference>
<dbReference type="GO" id="GO:0000107">
    <property type="term" value="F:imidazoleglycerol-phosphate synthase activity"/>
    <property type="evidence" value="ECO:0007669"/>
    <property type="project" value="UniProtKB-UniRule"/>
</dbReference>
<dbReference type="GO" id="GO:0016829">
    <property type="term" value="F:lyase activity"/>
    <property type="evidence" value="ECO:0007669"/>
    <property type="project" value="UniProtKB-KW"/>
</dbReference>
<dbReference type="GO" id="GO:0000105">
    <property type="term" value="P:L-histidine biosynthetic process"/>
    <property type="evidence" value="ECO:0007669"/>
    <property type="project" value="UniProtKB-UniRule"/>
</dbReference>
<dbReference type="CDD" id="cd04731">
    <property type="entry name" value="HisF"/>
    <property type="match status" value="1"/>
</dbReference>
<dbReference type="FunFam" id="3.20.20.70:FF:000462">
    <property type="entry name" value="Multifunctional fusion protein"/>
    <property type="match status" value="1"/>
</dbReference>
<dbReference type="Gene3D" id="3.20.20.70">
    <property type="entry name" value="Aldolase class I"/>
    <property type="match status" value="1"/>
</dbReference>
<dbReference type="HAMAP" id="MF_01013">
    <property type="entry name" value="HisF"/>
    <property type="match status" value="1"/>
</dbReference>
<dbReference type="InterPro" id="IPR013785">
    <property type="entry name" value="Aldolase_TIM"/>
</dbReference>
<dbReference type="InterPro" id="IPR006062">
    <property type="entry name" value="His_biosynth"/>
</dbReference>
<dbReference type="InterPro" id="IPR004651">
    <property type="entry name" value="HisF"/>
</dbReference>
<dbReference type="InterPro" id="IPR050064">
    <property type="entry name" value="IGPS_HisA/HisF"/>
</dbReference>
<dbReference type="InterPro" id="IPR011060">
    <property type="entry name" value="RibuloseP-bd_barrel"/>
</dbReference>
<dbReference type="NCBIfam" id="TIGR00735">
    <property type="entry name" value="hisF"/>
    <property type="match status" value="1"/>
</dbReference>
<dbReference type="PANTHER" id="PTHR21235:SF2">
    <property type="entry name" value="IMIDAZOLE GLYCEROL PHOSPHATE SYNTHASE HISHF"/>
    <property type="match status" value="1"/>
</dbReference>
<dbReference type="PANTHER" id="PTHR21235">
    <property type="entry name" value="IMIDAZOLE GLYCEROL PHOSPHATE SYNTHASE SUBUNIT HISF/H IGP SYNTHASE SUBUNIT HISF/H"/>
    <property type="match status" value="1"/>
</dbReference>
<dbReference type="Pfam" id="PF00977">
    <property type="entry name" value="His_biosynth"/>
    <property type="match status" value="1"/>
</dbReference>
<dbReference type="SUPFAM" id="SSF51366">
    <property type="entry name" value="Ribulose-phoshate binding barrel"/>
    <property type="match status" value="1"/>
</dbReference>
<proteinExistence type="inferred from homology"/>
<reference key="1">
    <citation type="journal article" date="2008" name="Antimicrob. Agents Chemother.">
        <title>Mutated response regulator graR is responsible for phenotypic conversion of Staphylococcus aureus from heterogeneous vancomycin-intermediate resistance to vancomycin-intermediate resistance.</title>
        <authorList>
            <person name="Neoh H.-M."/>
            <person name="Cui L."/>
            <person name="Yuzawa H."/>
            <person name="Takeuchi F."/>
            <person name="Matsuo M."/>
            <person name="Hiramatsu K."/>
        </authorList>
    </citation>
    <scope>NUCLEOTIDE SEQUENCE [LARGE SCALE GENOMIC DNA]</scope>
    <source>
        <strain>Mu3 / ATCC 700698</strain>
    </source>
</reference>
<organism>
    <name type="scientific">Staphylococcus aureus (strain Mu3 / ATCC 700698)</name>
    <dbReference type="NCBI Taxonomy" id="418127"/>
    <lineage>
        <taxon>Bacteria</taxon>
        <taxon>Bacillati</taxon>
        <taxon>Bacillota</taxon>
        <taxon>Bacilli</taxon>
        <taxon>Bacillales</taxon>
        <taxon>Staphylococcaceae</taxon>
        <taxon>Staphylococcus</taxon>
    </lineage>
</organism>
<accession>A7X763</accession>
<keyword id="KW-0028">Amino-acid biosynthesis</keyword>
<keyword id="KW-0963">Cytoplasm</keyword>
<keyword id="KW-0368">Histidine biosynthesis</keyword>
<keyword id="KW-0456">Lyase</keyword>
<comment type="function">
    <text evidence="1">IGPS catalyzes the conversion of PRFAR and glutamine to IGP, AICAR and glutamate. The HisF subunit catalyzes the cyclization activity that produces IGP and AICAR from PRFAR using the ammonia provided by the HisH subunit.</text>
</comment>
<comment type="catalytic activity">
    <reaction evidence="1">
        <text>5-[(5-phospho-1-deoxy-D-ribulos-1-ylimino)methylamino]-1-(5-phospho-beta-D-ribosyl)imidazole-4-carboxamide + L-glutamine = D-erythro-1-(imidazol-4-yl)glycerol 3-phosphate + 5-amino-1-(5-phospho-beta-D-ribosyl)imidazole-4-carboxamide + L-glutamate + H(+)</text>
        <dbReference type="Rhea" id="RHEA:24793"/>
        <dbReference type="ChEBI" id="CHEBI:15378"/>
        <dbReference type="ChEBI" id="CHEBI:29985"/>
        <dbReference type="ChEBI" id="CHEBI:58278"/>
        <dbReference type="ChEBI" id="CHEBI:58359"/>
        <dbReference type="ChEBI" id="CHEBI:58475"/>
        <dbReference type="ChEBI" id="CHEBI:58525"/>
        <dbReference type="EC" id="4.3.2.10"/>
    </reaction>
</comment>
<comment type="pathway">
    <text evidence="1">Amino-acid biosynthesis; L-histidine biosynthesis; L-histidine from 5-phospho-alpha-D-ribose 1-diphosphate: step 5/9.</text>
</comment>
<comment type="subunit">
    <text evidence="1">Heterodimer of HisH and HisF.</text>
</comment>
<comment type="subcellular location">
    <subcellularLocation>
        <location evidence="1">Cytoplasm</location>
    </subcellularLocation>
</comment>
<comment type="similarity">
    <text evidence="1">Belongs to the HisA/HisF family.</text>
</comment>
<evidence type="ECO:0000255" key="1">
    <source>
        <dbReference type="HAMAP-Rule" id="MF_01013"/>
    </source>
</evidence>
<gene>
    <name evidence="1" type="primary">hisF</name>
    <name type="ordered locus">SAHV_2657</name>
</gene>
<feature type="chain" id="PRO_1000063159" description="Imidazole glycerol phosphate synthase subunit HisF">
    <location>
        <begin position="1"/>
        <end position="252"/>
    </location>
</feature>
<feature type="active site" evidence="1">
    <location>
        <position position="11"/>
    </location>
</feature>
<feature type="active site" evidence="1">
    <location>
        <position position="130"/>
    </location>
</feature>
<sequence length="252" mass="27530">MIKKRIIPCLDVKDGRVVKGIQFKGLRDIGNPVDLAIYYNEAGADELVFLDISKTEEGHSLMLEVIEQTASRLFIPLTVGGGIQSLDDITQLLNHGADKVSLNSSALKNPQLIKQASDKFGRQCICIAIDSYYDPERKAHYCCTHGGKKMTNIKVYDWVQQVEQLGAGELLVTSMGHDGMKQGFDIEHLAKIKSLVNIPIIASGGGGNAQHFVELFNQTDVSAGLAASILHDRETTVQSIKEVIRQGGIAVR</sequence>
<name>HIS6_STAA1</name>
<protein>
    <recommendedName>
        <fullName evidence="1">Imidazole glycerol phosphate synthase subunit HisF</fullName>
        <ecNumber evidence="1">4.3.2.10</ecNumber>
    </recommendedName>
    <alternativeName>
        <fullName evidence="1">IGP synthase cyclase subunit</fullName>
    </alternativeName>
    <alternativeName>
        <fullName evidence="1">IGP synthase subunit HisF</fullName>
    </alternativeName>
    <alternativeName>
        <fullName evidence="1">ImGP synthase subunit HisF</fullName>
        <shortName evidence="1">IGPS subunit HisF</shortName>
    </alternativeName>
</protein>